<sequence>MKKVLASATILSLMLVGCSNGGNDESSHKDDSSKTEQKDKSSSQHDSKKDSKRNDTNNKQDNQENNTNKEQTNNQNPNDGEQRTSERPTTNSNGNSSDNQNKQQQSVQDNQNKYVAPYQSENATRVARCLSPFEGDRSQALQQLPNFETALSIAKNEANMYGSENKSYNDYSIEQTEDGFRYVFSFKDPSKSNTYSIVTLNRQGQPTVVDPNFQP</sequence>
<dbReference type="EMBL" id="CP000029">
    <property type="protein sequence ID" value="AAW52850.1"/>
    <property type="molecule type" value="Genomic_DNA"/>
</dbReference>
<dbReference type="RefSeq" id="WP_002456066.1">
    <property type="nucleotide sequence ID" value="NC_002976.3"/>
</dbReference>
<dbReference type="SMR" id="Q5HLM6"/>
<dbReference type="STRING" id="176279.SERP1959"/>
<dbReference type="KEGG" id="ser:SERP1959"/>
<dbReference type="eggNOG" id="ENOG5030EVE">
    <property type="taxonomic scope" value="Bacteria"/>
</dbReference>
<dbReference type="HOGENOM" id="CLU_088585_0_0_9"/>
<dbReference type="Proteomes" id="UP000000531">
    <property type="component" value="Chromosome"/>
</dbReference>
<dbReference type="GO" id="GO:0005886">
    <property type="term" value="C:plasma membrane"/>
    <property type="evidence" value="ECO:0007669"/>
    <property type="project" value="UniProtKB-SubCell"/>
</dbReference>
<dbReference type="PROSITE" id="PS51257">
    <property type="entry name" value="PROKAR_LIPOPROTEIN"/>
    <property type="match status" value="1"/>
</dbReference>
<keyword id="KW-1003">Cell membrane</keyword>
<keyword id="KW-0449">Lipoprotein</keyword>
<keyword id="KW-0472">Membrane</keyword>
<keyword id="KW-0564">Palmitate</keyword>
<keyword id="KW-1185">Reference proteome</keyword>
<keyword id="KW-0732">Signal</keyword>
<comment type="subcellular location">
    <subcellularLocation>
        <location evidence="1">Cell membrane</location>
        <topology evidence="1">Lipid-anchor</topology>
    </subcellularLocation>
</comment>
<organism>
    <name type="scientific">Staphylococcus epidermidis (strain ATCC 35984 / DSM 28319 / BCRC 17069 / CCUG 31568 / BM 3577 / RP62A)</name>
    <dbReference type="NCBI Taxonomy" id="176279"/>
    <lineage>
        <taxon>Bacteria</taxon>
        <taxon>Bacillati</taxon>
        <taxon>Bacillota</taxon>
        <taxon>Bacilli</taxon>
        <taxon>Bacillales</taxon>
        <taxon>Staphylococcaceae</taxon>
        <taxon>Staphylococcus</taxon>
    </lineage>
</organism>
<feature type="signal peptide" evidence="1">
    <location>
        <begin position="1"/>
        <end position="17"/>
    </location>
</feature>
<feature type="chain" id="PRO_0000296184" description="Uncharacterized lipoprotein SERP1959">
    <location>
        <begin position="18"/>
        <end position="215"/>
    </location>
</feature>
<feature type="region of interest" description="Disordered" evidence="2">
    <location>
        <begin position="17"/>
        <end position="110"/>
    </location>
</feature>
<feature type="compositionally biased region" description="Basic and acidic residues" evidence="2">
    <location>
        <begin position="25"/>
        <end position="62"/>
    </location>
</feature>
<feature type="compositionally biased region" description="Low complexity" evidence="2">
    <location>
        <begin position="63"/>
        <end position="76"/>
    </location>
</feature>
<feature type="compositionally biased region" description="Low complexity" evidence="2">
    <location>
        <begin position="91"/>
        <end position="110"/>
    </location>
</feature>
<feature type="lipid moiety-binding region" description="N-palmitoyl cysteine" evidence="1">
    <location>
        <position position="18"/>
    </location>
</feature>
<feature type="lipid moiety-binding region" description="S-diacylglycerol cysteine" evidence="1">
    <location>
        <position position="18"/>
    </location>
</feature>
<reference key="1">
    <citation type="journal article" date="2005" name="J. Bacteriol.">
        <title>Insights on evolution of virulence and resistance from the complete genome analysis of an early methicillin-resistant Staphylococcus aureus strain and a biofilm-producing methicillin-resistant Staphylococcus epidermidis strain.</title>
        <authorList>
            <person name="Gill S.R."/>
            <person name="Fouts D.E."/>
            <person name="Archer G.L."/>
            <person name="Mongodin E.F."/>
            <person name="DeBoy R.T."/>
            <person name="Ravel J."/>
            <person name="Paulsen I.T."/>
            <person name="Kolonay J.F."/>
            <person name="Brinkac L.M."/>
            <person name="Beanan M.J."/>
            <person name="Dodson R.J."/>
            <person name="Daugherty S.C."/>
            <person name="Madupu R."/>
            <person name="Angiuoli S.V."/>
            <person name="Durkin A.S."/>
            <person name="Haft D.H."/>
            <person name="Vamathevan J.J."/>
            <person name="Khouri H."/>
            <person name="Utterback T.R."/>
            <person name="Lee C."/>
            <person name="Dimitrov G."/>
            <person name="Jiang L."/>
            <person name="Qin H."/>
            <person name="Weidman J."/>
            <person name="Tran K."/>
            <person name="Kang K.H."/>
            <person name="Hance I.R."/>
            <person name="Nelson K.E."/>
            <person name="Fraser C.M."/>
        </authorList>
    </citation>
    <scope>NUCLEOTIDE SEQUENCE [LARGE SCALE GENOMIC DNA]</scope>
    <source>
        <strain>ATCC 35984 / DSM 28319 / BCRC 17069 / CCUG 31568 / BM 3577 / RP62A</strain>
    </source>
</reference>
<gene>
    <name type="ordered locus">SERP1959</name>
</gene>
<protein>
    <recommendedName>
        <fullName>Uncharacterized lipoprotein SERP1959</fullName>
    </recommendedName>
</protein>
<name>Y1959_STAEQ</name>
<proteinExistence type="inferred from homology"/>
<accession>Q5HLM6</accession>
<evidence type="ECO:0000255" key="1">
    <source>
        <dbReference type="PROSITE-ProRule" id="PRU00303"/>
    </source>
</evidence>
<evidence type="ECO:0000256" key="2">
    <source>
        <dbReference type="SAM" id="MobiDB-lite"/>
    </source>
</evidence>